<keyword id="KW-1015">Disulfide bond</keyword>
<keyword id="KW-0646">Protease inhibitor</keyword>
<keyword id="KW-1267">Proteomics identification</keyword>
<keyword id="KW-1185">Reference proteome</keyword>
<keyword id="KW-0964">Secreted</keyword>
<keyword id="KW-0722">Serine protease inhibitor</keyword>
<keyword id="KW-0732">Signal</keyword>
<organism>
    <name type="scientific">Homo sapiens</name>
    <name type="common">Human</name>
    <dbReference type="NCBI Taxonomy" id="9606"/>
    <lineage>
        <taxon>Eukaryota</taxon>
        <taxon>Metazoa</taxon>
        <taxon>Chordata</taxon>
        <taxon>Craniata</taxon>
        <taxon>Vertebrata</taxon>
        <taxon>Euteleostomi</taxon>
        <taxon>Mammalia</taxon>
        <taxon>Eutheria</taxon>
        <taxon>Euarchontoglires</taxon>
        <taxon>Primates</taxon>
        <taxon>Haplorrhini</taxon>
        <taxon>Catarrhini</taxon>
        <taxon>Hominidae</taxon>
        <taxon>Homo</taxon>
    </lineage>
</organism>
<comment type="function">
    <text evidence="1">Has growth inhibitory activity.</text>
</comment>
<comment type="subcellular location">
    <subcellularLocation>
        <location evidence="8">Secreted</location>
    </subcellularLocation>
</comment>
<comment type="sequence caution" evidence="8">
    <conflict type="frameshift">
        <sequence resource="EMBL-CDS" id="AAG15263"/>
    </conflict>
</comment>
<comment type="online information" name="Atlas of Genetics and Cytogenetics in Oncology and Haematology">
    <link uri="https://atlasgeneticsoncology.org/gene/424/WFDC1"/>
</comment>
<name>WFDC1_HUMAN</name>
<accession>Q9HC57</accession>
<accession>D3DUL7</accession>
<accession>Q8NC27</accession>
<accession>Q9HAU1</accession>
<reference key="1">
    <citation type="journal article" date="2000" name="Mamm. Genome">
        <title>The WFDC1 gene encoding ps20 localizes to 16q24, a region of LOH in multiple cancers.</title>
        <authorList>
            <person name="Larsen M."/>
            <person name="Ressler S.J."/>
            <person name="Gerdes M.J."/>
            <person name="Lu B."/>
            <person name="Byron M."/>
            <person name="Lawrence J.B."/>
            <person name="Rowley D.R."/>
        </authorList>
    </citation>
    <scope>NUCLEOTIDE SEQUENCE [MRNA]</scope>
    <scope>VARIANT ARG-217</scope>
    <source>
        <tissue>Prostate</tissue>
    </source>
</reference>
<reference key="2">
    <citation type="submission" date="2000-09" db="EMBL/GenBank/DDBJ databases">
        <title>Molecular cloning and characterization of the human ps20 protein in human uterus.</title>
        <authorList>
            <person name="Ong C.K."/>
            <person name="Ng C.Y."/>
            <person name="Lim K.B."/>
            <person name="Chan T.W.M.G."/>
            <person name="Huynh H."/>
        </authorList>
    </citation>
    <scope>NUCLEOTIDE SEQUENCE [MRNA]</scope>
    <source>
        <tissue>Uterus</tissue>
    </source>
</reference>
<reference key="3">
    <citation type="journal article" date="2004" name="Nat. Genet.">
        <title>Complete sequencing and characterization of 21,243 full-length human cDNAs.</title>
        <authorList>
            <person name="Ota T."/>
            <person name="Suzuki Y."/>
            <person name="Nishikawa T."/>
            <person name="Otsuki T."/>
            <person name="Sugiyama T."/>
            <person name="Irie R."/>
            <person name="Wakamatsu A."/>
            <person name="Hayashi K."/>
            <person name="Sato H."/>
            <person name="Nagai K."/>
            <person name="Kimura K."/>
            <person name="Makita H."/>
            <person name="Sekine M."/>
            <person name="Obayashi M."/>
            <person name="Nishi T."/>
            <person name="Shibahara T."/>
            <person name="Tanaka T."/>
            <person name="Ishii S."/>
            <person name="Yamamoto J."/>
            <person name="Saito K."/>
            <person name="Kawai Y."/>
            <person name="Isono Y."/>
            <person name="Nakamura Y."/>
            <person name="Nagahari K."/>
            <person name="Murakami K."/>
            <person name="Yasuda T."/>
            <person name="Iwayanagi T."/>
            <person name="Wagatsuma M."/>
            <person name="Shiratori A."/>
            <person name="Sudo H."/>
            <person name="Hosoiri T."/>
            <person name="Kaku Y."/>
            <person name="Kodaira H."/>
            <person name="Kondo H."/>
            <person name="Sugawara M."/>
            <person name="Takahashi M."/>
            <person name="Kanda K."/>
            <person name="Yokoi T."/>
            <person name="Furuya T."/>
            <person name="Kikkawa E."/>
            <person name="Omura Y."/>
            <person name="Abe K."/>
            <person name="Kamihara K."/>
            <person name="Katsuta N."/>
            <person name="Sato K."/>
            <person name="Tanikawa M."/>
            <person name="Yamazaki M."/>
            <person name="Ninomiya K."/>
            <person name="Ishibashi T."/>
            <person name="Yamashita H."/>
            <person name="Murakawa K."/>
            <person name="Fujimori K."/>
            <person name="Tanai H."/>
            <person name="Kimata M."/>
            <person name="Watanabe M."/>
            <person name="Hiraoka S."/>
            <person name="Chiba Y."/>
            <person name="Ishida S."/>
            <person name="Ono Y."/>
            <person name="Takiguchi S."/>
            <person name="Watanabe S."/>
            <person name="Yosida M."/>
            <person name="Hotuta T."/>
            <person name="Kusano J."/>
            <person name="Kanehori K."/>
            <person name="Takahashi-Fujii A."/>
            <person name="Hara H."/>
            <person name="Tanase T.-O."/>
            <person name="Nomura Y."/>
            <person name="Togiya S."/>
            <person name="Komai F."/>
            <person name="Hara R."/>
            <person name="Takeuchi K."/>
            <person name="Arita M."/>
            <person name="Imose N."/>
            <person name="Musashino K."/>
            <person name="Yuuki H."/>
            <person name="Oshima A."/>
            <person name="Sasaki N."/>
            <person name="Aotsuka S."/>
            <person name="Yoshikawa Y."/>
            <person name="Matsunawa H."/>
            <person name="Ichihara T."/>
            <person name="Shiohata N."/>
            <person name="Sano S."/>
            <person name="Moriya S."/>
            <person name="Momiyama H."/>
            <person name="Satoh N."/>
            <person name="Takami S."/>
            <person name="Terashima Y."/>
            <person name="Suzuki O."/>
            <person name="Nakagawa S."/>
            <person name="Senoh A."/>
            <person name="Mizoguchi H."/>
            <person name="Goto Y."/>
            <person name="Shimizu F."/>
            <person name="Wakebe H."/>
            <person name="Hishigaki H."/>
            <person name="Watanabe T."/>
            <person name="Sugiyama A."/>
            <person name="Takemoto M."/>
            <person name="Kawakami B."/>
            <person name="Yamazaki M."/>
            <person name="Watanabe K."/>
            <person name="Kumagai A."/>
            <person name="Itakura S."/>
            <person name="Fukuzumi Y."/>
            <person name="Fujimori Y."/>
            <person name="Komiyama M."/>
            <person name="Tashiro H."/>
            <person name="Tanigami A."/>
            <person name="Fujiwara T."/>
            <person name="Ono T."/>
            <person name="Yamada K."/>
            <person name="Fujii Y."/>
            <person name="Ozaki K."/>
            <person name="Hirao M."/>
            <person name="Ohmori Y."/>
            <person name="Kawabata A."/>
            <person name="Hikiji T."/>
            <person name="Kobatake N."/>
            <person name="Inagaki H."/>
            <person name="Ikema Y."/>
            <person name="Okamoto S."/>
            <person name="Okitani R."/>
            <person name="Kawakami T."/>
            <person name="Noguchi S."/>
            <person name="Itoh T."/>
            <person name="Shigeta K."/>
            <person name="Senba T."/>
            <person name="Matsumura K."/>
            <person name="Nakajima Y."/>
            <person name="Mizuno T."/>
            <person name="Morinaga M."/>
            <person name="Sasaki M."/>
            <person name="Togashi T."/>
            <person name="Oyama M."/>
            <person name="Hata H."/>
            <person name="Watanabe M."/>
            <person name="Komatsu T."/>
            <person name="Mizushima-Sugano J."/>
            <person name="Satoh T."/>
            <person name="Shirai Y."/>
            <person name="Takahashi Y."/>
            <person name="Nakagawa K."/>
            <person name="Okumura K."/>
            <person name="Nagase T."/>
            <person name="Nomura N."/>
            <person name="Kikuchi H."/>
            <person name="Masuho Y."/>
            <person name="Yamashita R."/>
            <person name="Nakai K."/>
            <person name="Yada T."/>
            <person name="Nakamura Y."/>
            <person name="Ohara O."/>
            <person name="Isogai T."/>
            <person name="Sugano S."/>
        </authorList>
    </citation>
    <scope>NUCLEOTIDE SEQUENCE [LARGE SCALE MRNA]</scope>
    <source>
        <tissue>Placenta</tissue>
    </source>
</reference>
<reference key="4">
    <citation type="submission" date="2005-09" db="EMBL/GenBank/DDBJ databases">
        <authorList>
            <person name="Mural R.J."/>
            <person name="Istrail S."/>
            <person name="Sutton G.G."/>
            <person name="Florea L."/>
            <person name="Halpern A.L."/>
            <person name="Mobarry C.M."/>
            <person name="Lippert R."/>
            <person name="Walenz B."/>
            <person name="Shatkay H."/>
            <person name="Dew I."/>
            <person name="Miller J.R."/>
            <person name="Flanigan M.J."/>
            <person name="Edwards N.J."/>
            <person name="Bolanos R."/>
            <person name="Fasulo D."/>
            <person name="Halldorsson B.V."/>
            <person name="Hannenhalli S."/>
            <person name="Turner R."/>
            <person name="Yooseph S."/>
            <person name="Lu F."/>
            <person name="Nusskern D.R."/>
            <person name="Shue B.C."/>
            <person name="Zheng X.H."/>
            <person name="Zhong F."/>
            <person name="Delcher A.L."/>
            <person name="Huson D.H."/>
            <person name="Kravitz S.A."/>
            <person name="Mouchard L."/>
            <person name="Reinert K."/>
            <person name="Remington K.A."/>
            <person name="Clark A.G."/>
            <person name="Waterman M.S."/>
            <person name="Eichler E.E."/>
            <person name="Adams M.D."/>
            <person name="Hunkapiller M.W."/>
            <person name="Myers E.W."/>
            <person name="Venter J.C."/>
        </authorList>
    </citation>
    <scope>NUCLEOTIDE SEQUENCE [LARGE SCALE GENOMIC DNA]</scope>
    <scope>VARIANT ARG-217</scope>
</reference>
<reference key="5">
    <citation type="journal article" date="2004" name="Genome Res.">
        <title>The status, quality, and expansion of the NIH full-length cDNA project: the Mammalian Gene Collection (MGC).</title>
        <authorList>
            <consortium name="The MGC Project Team"/>
        </authorList>
    </citation>
    <scope>NUCLEOTIDE SEQUENCE [LARGE SCALE MRNA]</scope>
    <source>
        <tissue>Colon</tissue>
        <tissue>Kidney</tissue>
        <tissue>Stomach</tissue>
    </source>
</reference>
<reference key="6">
    <citation type="journal article" date="2006" name="Science">
        <title>The consensus coding sequences of human breast and colorectal cancers.</title>
        <authorList>
            <person name="Sjoeblom T."/>
            <person name="Jones S."/>
            <person name="Wood L.D."/>
            <person name="Parsons D.W."/>
            <person name="Lin J."/>
            <person name="Barber T.D."/>
            <person name="Mandelker D."/>
            <person name="Leary R.J."/>
            <person name="Ptak J."/>
            <person name="Silliman N."/>
            <person name="Szabo S."/>
            <person name="Buckhaults P."/>
            <person name="Farrell C."/>
            <person name="Meeh P."/>
            <person name="Markowitz S.D."/>
            <person name="Willis J."/>
            <person name="Dawson D."/>
            <person name="Willson J.K.V."/>
            <person name="Gazdar A.F."/>
            <person name="Hartigan J."/>
            <person name="Wu L."/>
            <person name="Liu C."/>
            <person name="Parmigiani G."/>
            <person name="Park B.H."/>
            <person name="Bachman K.E."/>
            <person name="Papadopoulos N."/>
            <person name="Vogelstein B."/>
            <person name="Kinzler K.W."/>
            <person name="Velculescu V.E."/>
        </authorList>
    </citation>
    <scope>VARIANT [LARGE SCALE ANALYSIS] MET-138</scope>
</reference>
<evidence type="ECO:0000250" key="1"/>
<evidence type="ECO:0000255" key="2"/>
<evidence type="ECO:0000255" key="3">
    <source>
        <dbReference type="PROSITE-ProRule" id="PRU00722"/>
    </source>
</evidence>
<evidence type="ECO:0000256" key="4">
    <source>
        <dbReference type="SAM" id="MobiDB-lite"/>
    </source>
</evidence>
<evidence type="ECO:0000269" key="5">
    <source>
    </source>
</evidence>
<evidence type="ECO:0000269" key="6">
    <source>
    </source>
</evidence>
<evidence type="ECO:0000269" key="7">
    <source ref="4"/>
</evidence>
<evidence type="ECO:0000305" key="8"/>
<gene>
    <name type="primary">WFDC1</name>
    <name type="synonym">PS20</name>
</gene>
<proteinExistence type="evidence at protein level"/>
<protein>
    <recommendedName>
        <fullName>WAP four-disulfide core domain protein 1</fullName>
    </recommendedName>
    <alternativeName>
        <fullName>Prostate stromal protein ps20</fullName>
    </alternativeName>
    <alternativeName>
        <fullName>ps20 growth inhibitor</fullName>
    </alternativeName>
</protein>
<sequence>MPLTGVGPGSCRRQIIRALCLLLLLLHAGSAKNIWKRALPARLAEKSRAEEAGAPGGPRQPRADRCPPPPRTLPPGACQAARCQADSECPRHRRCCYNGCAYACLEAVPPPPVLDWLVQPKPRWLGGNGWLLDGPEEVLQAEACSTTEDGAEPLLCPSGYECHILSPGDVAEGIPNRGQCVKQRRQADGRILRHKLYKEYPEGDSKNVAEPGRGQQKHFQ</sequence>
<dbReference type="EMBL" id="AF169631">
    <property type="protein sequence ID" value="AAG16647.1"/>
    <property type="molecule type" value="mRNA"/>
</dbReference>
<dbReference type="EMBL" id="AF302109">
    <property type="protein sequence ID" value="AAG15263.1"/>
    <property type="status" value="ALT_FRAME"/>
    <property type="molecule type" value="mRNA"/>
</dbReference>
<dbReference type="EMBL" id="AK075061">
    <property type="protein sequence ID" value="BAC11377.1"/>
    <property type="molecule type" value="mRNA"/>
</dbReference>
<dbReference type="EMBL" id="CH471114">
    <property type="protein sequence ID" value="EAW95486.1"/>
    <property type="molecule type" value="Genomic_DNA"/>
</dbReference>
<dbReference type="EMBL" id="CH471114">
    <property type="protein sequence ID" value="EAW95487.1"/>
    <property type="molecule type" value="Genomic_DNA"/>
</dbReference>
<dbReference type="EMBL" id="BC029159">
    <property type="protein sequence ID" value="AAH29159.1"/>
    <property type="molecule type" value="mRNA"/>
</dbReference>
<dbReference type="CCDS" id="CCDS10946.1"/>
<dbReference type="RefSeq" id="NP_001269395.1">
    <property type="nucleotide sequence ID" value="NM_001282466.2"/>
</dbReference>
<dbReference type="RefSeq" id="NP_001269396.1">
    <property type="nucleotide sequence ID" value="NM_001282467.1"/>
</dbReference>
<dbReference type="RefSeq" id="NP_067020.2">
    <property type="nucleotide sequence ID" value="NM_021197.3"/>
</dbReference>
<dbReference type="RefSeq" id="XP_054169540.1">
    <property type="nucleotide sequence ID" value="XM_054313565.1"/>
</dbReference>
<dbReference type="RefSeq" id="XP_054169541.1">
    <property type="nucleotide sequence ID" value="XM_054313566.1"/>
</dbReference>
<dbReference type="RefSeq" id="XP_054169542.1">
    <property type="nucleotide sequence ID" value="XM_054313567.1"/>
</dbReference>
<dbReference type="RefSeq" id="XP_054169543.1">
    <property type="nucleotide sequence ID" value="XM_054313568.1"/>
</dbReference>
<dbReference type="RefSeq" id="XP_054169544.1">
    <property type="nucleotide sequence ID" value="XM_054313569.1"/>
</dbReference>
<dbReference type="SMR" id="Q9HC57"/>
<dbReference type="BioGRID" id="121803">
    <property type="interactions" value="146"/>
</dbReference>
<dbReference type="FunCoup" id="Q9HC57">
    <property type="interactions" value="279"/>
</dbReference>
<dbReference type="IntAct" id="Q9HC57">
    <property type="interactions" value="10"/>
</dbReference>
<dbReference type="STRING" id="9606.ENSP00000456920"/>
<dbReference type="iPTMnet" id="Q9HC57"/>
<dbReference type="PhosphoSitePlus" id="Q9HC57"/>
<dbReference type="BioMuta" id="WFDC1"/>
<dbReference type="DMDM" id="22096244"/>
<dbReference type="MassIVE" id="Q9HC57"/>
<dbReference type="PaxDb" id="9606-ENSP00000219454"/>
<dbReference type="PeptideAtlas" id="Q9HC57"/>
<dbReference type="ProteomicsDB" id="81641"/>
<dbReference type="Antibodypedia" id="30582">
    <property type="antibodies" value="175 antibodies from 28 providers"/>
</dbReference>
<dbReference type="DNASU" id="58189"/>
<dbReference type="Ensembl" id="ENST00000219454.10">
    <property type="protein sequence ID" value="ENSP00000219454.5"/>
    <property type="gene ID" value="ENSG00000103175.11"/>
</dbReference>
<dbReference type="Ensembl" id="ENST00000568638.1">
    <property type="protein sequence ID" value="ENSP00000456920.1"/>
    <property type="gene ID" value="ENSG00000103175.11"/>
</dbReference>
<dbReference type="GeneID" id="58189"/>
<dbReference type="KEGG" id="hsa:58189"/>
<dbReference type="MANE-Select" id="ENST00000219454.10">
    <property type="protein sequence ID" value="ENSP00000219454.5"/>
    <property type="RefSeq nucleotide sequence ID" value="NM_021197.4"/>
    <property type="RefSeq protein sequence ID" value="NP_067020.2"/>
</dbReference>
<dbReference type="UCSC" id="uc002fhv.5">
    <property type="organism name" value="human"/>
</dbReference>
<dbReference type="AGR" id="HGNC:15466"/>
<dbReference type="CTD" id="58189"/>
<dbReference type="DisGeNET" id="58189"/>
<dbReference type="GeneCards" id="WFDC1"/>
<dbReference type="HGNC" id="HGNC:15466">
    <property type="gene designation" value="WFDC1"/>
</dbReference>
<dbReference type="HPA" id="ENSG00000103175">
    <property type="expression patterns" value="Tissue enhanced (placenta, seminal vesicle)"/>
</dbReference>
<dbReference type="MIM" id="605322">
    <property type="type" value="gene"/>
</dbReference>
<dbReference type="neXtProt" id="NX_Q9HC57"/>
<dbReference type="OpenTargets" id="ENSG00000103175"/>
<dbReference type="PharmGKB" id="PA37963"/>
<dbReference type="VEuPathDB" id="HostDB:ENSG00000103175"/>
<dbReference type="eggNOG" id="ENOG502QWDC">
    <property type="taxonomic scope" value="Eukaryota"/>
</dbReference>
<dbReference type="GeneTree" id="ENSGT00390000014299"/>
<dbReference type="HOGENOM" id="CLU_108761_0_0_1"/>
<dbReference type="InParanoid" id="Q9HC57"/>
<dbReference type="OMA" id="RFYKEYP"/>
<dbReference type="OrthoDB" id="5989673at2759"/>
<dbReference type="PAN-GO" id="Q9HC57">
    <property type="GO annotations" value="2 GO annotations based on evolutionary models"/>
</dbReference>
<dbReference type="PhylomeDB" id="Q9HC57"/>
<dbReference type="TreeFam" id="TF328768"/>
<dbReference type="PathwayCommons" id="Q9HC57"/>
<dbReference type="SignaLink" id="Q9HC57"/>
<dbReference type="BioGRID-ORCS" id="58189">
    <property type="hits" value="10 hits in 1143 CRISPR screens"/>
</dbReference>
<dbReference type="ChiTaRS" id="WFDC1">
    <property type="organism name" value="human"/>
</dbReference>
<dbReference type="GeneWiki" id="WFDC1"/>
<dbReference type="GenomeRNAi" id="58189"/>
<dbReference type="Pharos" id="Q9HC57">
    <property type="development level" value="Tbio"/>
</dbReference>
<dbReference type="PRO" id="PR:Q9HC57"/>
<dbReference type="Proteomes" id="UP000005640">
    <property type="component" value="Chromosome 16"/>
</dbReference>
<dbReference type="RNAct" id="Q9HC57">
    <property type="molecule type" value="protein"/>
</dbReference>
<dbReference type="Bgee" id="ENSG00000103175">
    <property type="expression patterns" value="Expressed in saphenous vein and 167 other cell types or tissues"/>
</dbReference>
<dbReference type="ExpressionAtlas" id="Q9HC57">
    <property type="expression patterns" value="baseline and differential"/>
</dbReference>
<dbReference type="GO" id="GO:0005615">
    <property type="term" value="C:extracellular space"/>
    <property type="evidence" value="ECO:0000318"/>
    <property type="project" value="GO_Central"/>
</dbReference>
<dbReference type="GO" id="GO:0004867">
    <property type="term" value="F:serine-type endopeptidase inhibitor activity"/>
    <property type="evidence" value="ECO:0007669"/>
    <property type="project" value="UniProtKB-KW"/>
</dbReference>
<dbReference type="GO" id="GO:0030308">
    <property type="term" value="P:negative regulation of cell growth"/>
    <property type="evidence" value="ECO:0000303"/>
    <property type="project" value="UniProtKB"/>
</dbReference>
<dbReference type="GO" id="GO:0050728">
    <property type="term" value="P:negative regulation of inflammatory response"/>
    <property type="evidence" value="ECO:0007669"/>
    <property type="project" value="Ensembl"/>
</dbReference>
<dbReference type="GO" id="GO:0061045">
    <property type="term" value="P:negative regulation of wound healing"/>
    <property type="evidence" value="ECO:0007669"/>
    <property type="project" value="Ensembl"/>
</dbReference>
<dbReference type="GO" id="GO:0001558">
    <property type="term" value="P:regulation of cell growth"/>
    <property type="evidence" value="ECO:0000318"/>
    <property type="project" value="GO_Central"/>
</dbReference>
<dbReference type="FunFam" id="4.10.75.10:FF:000003">
    <property type="entry name" value="WAP four-disulfide core domain protein 1"/>
    <property type="match status" value="1"/>
</dbReference>
<dbReference type="Gene3D" id="4.10.75.10">
    <property type="entry name" value="Elafin-like"/>
    <property type="match status" value="1"/>
</dbReference>
<dbReference type="InterPro" id="IPR036645">
    <property type="entry name" value="Elafin-like_sf"/>
</dbReference>
<dbReference type="InterPro" id="IPR008197">
    <property type="entry name" value="WAP_dom"/>
</dbReference>
<dbReference type="InterPro" id="IPR042357">
    <property type="entry name" value="WFDC1"/>
</dbReference>
<dbReference type="PANTHER" id="PTHR14308">
    <property type="entry name" value="WAP FOUR-DISULFIDE CORE DOMAIN PROTEIN 1"/>
    <property type="match status" value="1"/>
</dbReference>
<dbReference type="PANTHER" id="PTHR14308:SF0">
    <property type="entry name" value="WAP FOUR-DISULFIDE CORE DOMAIN PROTEIN 1"/>
    <property type="match status" value="1"/>
</dbReference>
<dbReference type="Pfam" id="PF00095">
    <property type="entry name" value="WAP"/>
    <property type="match status" value="1"/>
</dbReference>
<dbReference type="SMART" id="SM00217">
    <property type="entry name" value="WAP"/>
    <property type="match status" value="1"/>
</dbReference>
<dbReference type="SUPFAM" id="SSF57256">
    <property type="entry name" value="Elafin-like"/>
    <property type="match status" value="1"/>
</dbReference>
<dbReference type="PROSITE" id="PS51390">
    <property type="entry name" value="WAP"/>
    <property type="match status" value="1"/>
</dbReference>
<feature type="signal peptide" evidence="2">
    <location>
        <begin position="1"/>
        <end position="31"/>
    </location>
</feature>
<feature type="chain" id="PRO_0000041365" description="WAP four-disulfide core domain protein 1">
    <location>
        <begin position="32"/>
        <end position="220"/>
    </location>
</feature>
<feature type="domain" description="WAP" evidence="3">
    <location>
        <begin position="59"/>
        <end position="108"/>
    </location>
</feature>
<feature type="region of interest" description="Disordered" evidence="4">
    <location>
        <begin position="46"/>
        <end position="70"/>
    </location>
</feature>
<feature type="region of interest" description="Disordered" evidence="4">
    <location>
        <begin position="199"/>
        <end position="220"/>
    </location>
</feature>
<feature type="disulfide bond" evidence="3">
    <location>
        <begin position="66"/>
        <end position="96"/>
    </location>
</feature>
<feature type="disulfide bond" evidence="3">
    <location>
        <begin position="78"/>
        <end position="100"/>
    </location>
</feature>
<feature type="disulfide bond" evidence="3">
    <location>
        <begin position="83"/>
        <end position="95"/>
    </location>
</feature>
<feature type="disulfide bond" evidence="3">
    <location>
        <begin position="89"/>
        <end position="104"/>
    </location>
</feature>
<feature type="sequence variant" id="VAR_036489" description="In a breast cancer sample; somatic mutation; dbSNP:rs11643870." evidence="6">
    <original>V</original>
    <variation>M</variation>
    <location>
        <position position="138"/>
    </location>
</feature>
<feature type="sequence variant" id="VAR_052948" description="In dbSNP:rs35504166.">
    <original>L</original>
    <variation>V</variation>
    <location>
        <position position="196"/>
    </location>
</feature>
<feature type="sequence variant" id="VAR_052949" description="In dbSNP:rs12933084." evidence="5 7">
    <original>K</original>
    <variation>R</variation>
    <location>
        <position position="217"/>
    </location>
</feature>
<feature type="sequence conflict" description="In Ref. 3; BAC11377." evidence="8" ref="3">
    <original>N</original>
    <variation>D</variation>
    <location>
        <position position="33"/>
    </location>
</feature>
<feature type="sequence conflict" description="In Ref. 3; BAC11377." evidence="8" ref="3">
    <original>Q</original>
    <variation>R</variation>
    <location>
        <position position="79"/>
    </location>
</feature>